<dbReference type="EC" id="7.1.1.2" evidence="1"/>
<dbReference type="EMBL" id="AB061526">
    <property type="protein sequence ID" value="BAB70625.1"/>
    <property type="molecule type" value="Genomic_DNA"/>
</dbReference>
<dbReference type="RefSeq" id="NP_976107.1">
    <property type="nucleotide sequence ID" value="NC_005434.1"/>
</dbReference>
<dbReference type="SMR" id="Q94P36"/>
<dbReference type="GeneID" id="2746384"/>
<dbReference type="CTD" id="4537"/>
<dbReference type="GO" id="GO:0005743">
    <property type="term" value="C:mitochondrial inner membrane"/>
    <property type="evidence" value="ECO:0000250"/>
    <property type="project" value="UniProtKB"/>
</dbReference>
<dbReference type="GO" id="GO:0030964">
    <property type="term" value="C:NADH dehydrogenase complex"/>
    <property type="evidence" value="ECO:0007669"/>
    <property type="project" value="TreeGrafter"/>
</dbReference>
<dbReference type="GO" id="GO:0008137">
    <property type="term" value="F:NADH dehydrogenase (ubiquinone) activity"/>
    <property type="evidence" value="ECO:0000250"/>
    <property type="project" value="UniProtKB"/>
</dbReference>
<dbReference type="GO" id="GO:0006120">
    <property type="term" value="P:mitochondrial electron transport, NADH to ubiquinone"/>
    <property type="evidence" value="ECO:0000250"/>
    <property type="project" value="UniProtKB"/>
</dbReference>
<dbReference type="FunFam" id="1.20.58.1610:FF:000004">
    <property type="entry name" value="NADH-quinone oxidoreductase subunit A"/>
    <property type="match status" value="1"/>
</dbReference>
<dbReference type="Gene3D" id="1.20.58.1610">
    <property type="entry name" value="NADH:ubiquinone/plastoquinone oxidoreductase, chain 3"/>
    <property type="match status" value="1"/>
</dbReference>
<dbReference type="InterPro" id="IPR000440">
    <property type="entry name" value="NADH_UbQ/plastoQ_OxRdtase_su3"/>
</dbReference>
<dbReference type="InterPro" id="IPR038430">
    <property type="entry name" value="NDAH_ubi_oxred_su3_sf"/>
</dbReference>
<dbReference type="PANTHER" id="PTHR11058">
    <property type="entry name" value="NADH-UBIQUINONE OXIDOREDUCTASE CHAIN 3"/>
    <property type="match status" value="1"/>
</dbReference>
<dbReference type="PANTHER" id="PTHR11058:SF9">
    <property type="entry name" value="NADH-UBIQUINONE OXIDOREDUCTASE CHAIN 3"/>
    <property type="match status" value="1"/>
</dbReference>
<dbReference type="Pfam" id="PF00507">
    <property type="entry name" value="Oxidored_q4"/>
    <property type="match status" value="1"/>
</dbReference>
<protein>
    <recommendedName>
        <fullName evidence="1">NADH-ubiquinone oxidoreductase chain 3</fullName>
        <ecNumber evidence="1">7.1.1.2</ecNumber>
    </recommendedName>
    <alternativeName>
        <fullName>NADH dehydrogenase subunit 3</fullName>
    </alternativeName>
</protein>
<name>NU3M_RHIPI</name>
<keyword id="KW-0249">Electron transport</keyword>
<keyword id="KW-0472">Membrane</keyword>
<keyword id="KW-0496">Mitochondrion</keyword>
<keyword id="KW-0999">Mitochondrion inner membrane</keyword>
<keyword id="KW-0520">NAD</keyword>
<keyword id="KW-0679">Respiratory chain</keyword>
<keyword id="KW-1278">Translocase</keyword>
<keyword id="KW-0812">Transmembrane</keyword>
<keyword id="KW-1133">Transmembrane helix</keyword>
<keyword id="KW-0813">Transport</keyword>
<keyword id="KW-0830">Ubiquinone</keyword>
<accession>Q94P36</accession>
<evidence type="ECO:0000250" key="1">
    <source>
        <dbReference type="UniProtKB" id="P03897"/>
    </source>
</evidence>
<evidence type="ECO:0000250" key="2">
    <source>
        <dbReference type="UniProtKB" id="P03898"/>
    </source>
</evidence>
<evidence type="ECO:0000255" key="3"/>
<evidence type="ECO:0000305" key="4"/>
<comment type="function">
    <text evidence="1">Core subunit of the mitochondrial membrane respiratory chain NADH dehydrogenase (Complex I) which catalyzes electron transfer from NADH through the respiratory chain, using ubiquinone as an electron acceptor. Essential for the catalytic activity of complex I.</text>
</comment>
<comment type="catalytic activity">
    <reaction evidence="1">
        <text>a ubiquinone + NADH + 5 H(+)(in) = a ubiquinol + NAD(+) + 4 H(+)(out)</text>
        <dbReference type="Rhea" id="RHEA:29091"/>
        <dbReference type="Rhea" id="RHEA-COMP:9565"/>
        <dbReference type="Rhea" id="RHEA-COMP:9566"/>
        <dbReference type="ChEBI" id="CHEBI:15378"/>
        <dbReference type="ChEBI" id="CHEBI:16389"/>
        <dbReference type="ChEBI" id="CHEBI:17976"/>
        <dbReference type="ChEBI" id="CHEBI:57540"/>
        <dbReference type="ChEBI" id="CHEBI:57945"/>
        <dbReference type="EC" id="7.1.1.2"/>
    </reaction>
</comment>
<comment type="subunit">
    <text evidence="1">Core subunit of respiratory chain NADH dehydrogenase (Complex I) which is composed of 45 different subunits. Interacts with TMEM186. Interacts with TMEM242 (By similarity).</text>
</comment>
<comment type="subcellular location">
    <subcellularLocation>
        <location evidence="2">Mitochondrion inner membrane</location>
        <topology evidence="3">Multi-pass membrane protein</topology>
    </subcellularLocation>
</comment>
<comment type="similarity">
    <text evidence="4">Belongs to the complex I subunit 3 family.</text>
</comment>
<feature type="chain" id="PRO_0000117823" description="NADH-ubiquinone oxidoreductase chain 3">
    <location>
        <begin position="1"/>
        <end position="115"/>
    </location>
</feature>
<feature type="transmembrane region" description="Helical" evidence="3">
    <location>
        <begin position="3"/>
        <end position="23"/>
    </location>
</feature>
<feature type="transmembrane region" description="Helical" evidence="3">
    <location>
        <begin position="55"/>
        <end position="75"/>
    </location>
</feature>
<feature type="transmembrane region" description="Helical" evidence="3">
    <location>
        <begin position="84"/>
        <end position="104"/>
    </location>
</feature>
<reference key="1">
    <citation type="journal article" date="2001" name="J. Mol. Evol.">
        <title>Maximum likelihood analysis of the complete mitochondrial genomes of eutherians and a reevaluation of the phylogeny of bats and insectivores.</title>
        <authorList>
            <person name="Nikaido M."/>
            <person name="Kawai K."/>
            <person name="Cao Y."/>
            <person name="Harada M."/>
            <person name="Tomita S."/>
            <person name="Okada N."/>
            <person name="Hasegawa M."/>
        </authorList>
    </citation>
    <scope>NUCLEOTIDE SEQUENCE [GENOMIC DNA]</scope>
</reference>
<gene>
    <name evidence="1" type="primary">MT-ND3</name>
    <name type="synonym">MTND3</name>
    <name type="synonym">NADH3</name>
    <name type="synonym">ND3</name>
</gene>
<sequence length="115" mass="12994">MNFMLTLLTNTLLALLLVTIAFWLPQTNVYSEKSSPYECGFDPMGSARLPFSMKFFLVAITFLLFDLEIALLLPLPWASQANNLEVMLTTALLLISLLAISLAYEWSQKGLEWTE</sequence>
<proteinExistence type="inferred from homology"/>
<organism>
    <name type="scientific">Rhinolophus pumilus</name>
    <name type="common">Horseshoe bat</name>
    <dbReference type="NCBI Taxonomy" id="159859"/>
    <lineage>
        <taxon>Eukaryota</taxon>
        <taxon>Metazoa</taxon>
        <taxon>Chordata</taxon>
        <taxon>Craniata</taxon>
        <taxon>Vertebrata</taxon>
        <taxon>Euteleostomi</taxon>
        <taxon>Mammalia</taxon>
        <taxon>Eutheria</taxon>
        <taxon>Laurasiatheria</taxon>
        <taxon>Chiroptera</taxon>
        <taxon>Yinpterochiroptera</taxon>
        <taxon>Rhinolophoidea</taxon>
        <taxon>Rhinolophidae</taxon>
        <taxon>Rhinolophinae</taxon>
        <taxon>Rhinolophus</taxon>
    </lineage>
</organism>
<geneLocation type="mitochondrion"/>